<proteinExistence type="inferred from homology"/>
<accession>Q1QIJ1</accession>
<sequence length="267" mass="28653">MTRRNNGHSARFLVASASWFSHHSGMIREPSRDRPGRSPAVAPSFQHERALLKRGVWPVAGCDEVGRGPLAGPVVAAAVVLDPKRIPKGIDDSKRLTAARREELFEEITATASFAVAFASTARIDRDNILRASLWALARAVHALPDMPRHVFVDGRDRIEIACACEPVIGGDGIVLSIAAASIVAKVTRDRLMCKLAQDCPGYGFETHKGYGVPAHLEALGRLGPSPHHRSFFAPVVAARERHRAPPIGESASATETSAGISIEATI</sequence>
<reference key="1">
    <citation type="submission" date="2006-03" db="EMBL/GenBank/DDBJ databases">
        <title>Complete sequence of chromosome of Nitrobacter hamburgensis X14.</title>
        <authorList>
            <consortium name="US DOE Joint Genome Institute"/>
            <person name="Copeland A."/>
            <person name="Lucas S."/>
            <person name="Lapidus A."/>
            <person name="Barry K."/>
            <person name="Detter J.C."/>
            <person name="Glavina del Rio T."/>
            <person name="Hammon N."/>
            <person name="Israni S."/>
            <person name="Dalin E."/>
            <person name="Tice H."/>
            <person name="Pitluck S."/>
            <person name="Chain P."/>
            <person name="Malfatti S."/>
            <person name="Shin M."/>
            <person name="Vergez L."/>
            <person name="Schmutz J."/>
            <person name="Larimer F."/>
            <person name="Land M."/>
            <person name="Hauser L."/>
            <person name="Kyrpides N."/>
            <person name="Ivanova N."/>
            <person name="Ward B."/>
            <person name="Arp D."/>
            <person name="Klotz M."/>
            <person name="Stein L."/>
            <person name="O'Mullan G."/>
            <person name="Starkenburg S."/>
            <person name="Sayavedra L."/>
            <person name="Poret-Peterson A.T."/>
            <person name="Gentry M.E."/>
            <person name="Bruce D."/>
            <person name="Richardson P."/>
        </authorList>
    </citation>
    <scope>NUCLEOTIDE SEQUENCE [LARGE SCALE GENOMIC DNA]</scope>
    <source>
        <strain>DSM 10229 / NCIMB 13809 / X14</strain>
    </source>
</reference>
<organism>
    <name type="scientific">Nitrobacter hamburgensis (strain DSM 10229 / NCIMB 13809 / X14)</name>
    <dbReference type="NCBI Taxonomy" id="323097"/>
    <lineage>
        <taxon>Bacteria</taxon>
        <taxon>Pseudomonadati</taxon>
        <taxon>Pseudomonadota</taxon>
        <taxon>Alphaproteobacteria</taxon>
        <taxon>Hyphomicrobiales</taxon>
        <taxon>Nitrobacteraceae</taxon>
        <taxon>Nitrobacter</taxon>
    </lineage>
</organism>
<comment type="function">
    <text evidence="1">Endonuclease that specifically degrades the RNA of RNA-DNA hybrids.</text>
</comment>
<comment type="catalytic activity">
    <reaction evidence="1">
        <text>Endonucleolytic cleavage to 5'-phosphomonoester.</text>
        <dbReference type="EC" id="3.1.26.4"/>
    </reaction>
</comment>
<comment type="cofactor">
    <cofactor evidence="1">
        <name>Mn(2+)</name>
        <dbReference type="ChEBI" id="CHEBI:29035"/>
    </cofactor>
    <cofactor evidence="1">
        <name>Mg(2+)</name>
        <dbReference type="ChEBI" id="CHEBI:18420"/>
    </cofactor>
    <text evidence="1">Manganese or magnesium. Binds 1 divalent metal ion per monomer in the absence of substrate. May bind a second metal ion after substrate binding.</text>
</comment>
<comment type="subcellular location">
    <subcellularLocation>
        <location evidence="1">Cytoplasm</location>
    </subcellularLocation>
</comment>
<comment type="similarity">
    <text evidence="1">Belongs to the RNase HII family.</text>
</comment>
<feature type="chain" id="PRO_1000031172" description="Ribonuclease HII">
    <location>
        <begin position="1"/>
        <end position="267"/>
    </location>
</feature>
<feature type="domain" description="RNase H type-2" evidence="2">
    <location>
        <begin position="57"/>
        <end position="245"/>
    </location>
</feature>
<feature type="binding site" evidence="1">
    <location>
        <position position="63"/>
    </location>
    <ligand>
        <name>a divalent metal cation</name>
        <dbReference type="ChEBI" id="CHEBI:60240"/>
    </ligand>
</feature>
<feature type="binding site" evidence="1">
    <location>
        <position position="64"/>
    </location>
    <ligand>
        <name>a divalent metal cation</name>
        <dbReference type="ChEBI" id="CHEBI:60240"/>
    </ligand>
</feature>
<feature type="binding site" evidence="1">
    <location>
        <position position="154"/>
    </location>
    <ligand>
        <name>a divalent metal cation</name>
        <dbReference type="ChEBI" id="CHEBI:60240"/>
    </ligand>
</feature>
<name>RNH2_NITHX</name>
<dbReference type="EC" id="3.1.26.4" evidence="1"/>
<dbReference type="EMBL" id="CP000319">
    <property type="protein sequence ID" value="ABE63956.1"/>
    <property type="molecule type" value="Genomic_DNA"/>
</dbReference>
<dbReference type="SMR" id="Q1QIJ1"/>
<dbReference type="STRING" id="323097.Nham_3221"/>
<dbReference type="KEGG" id="nha:Nham_3221"/>
<dbReference type="eggNOG" id="COG0164">
    <property type="taxonomic scope" value="Bacteria"/>
</dbReference>
<dbReference type="HOGENOM" id="CLU_036532_2_2_5"/>
<dbReference type="Proteomes" id="UP000001953">
    <property type="component" value="Chromosome"/>
</dbReference>
<dbReference type="GO" id="GO:0005737">
    <property type="term" value="C:cytoplasm"/>
    <property type="evidence" value="ECO:0007669"/>
    <property type="project" value="UniProtKB-SubCell"/>
</dbReference>
<dbReference type="GO" id="GO:0032299">
    <property type="term" value="C:ribonuclease H2 complex"/>
    <property type="evidence" value="ECO:0007669"/>
    <property type="project" value="TreeGrafter"/>
</dbReference>
<dbReference type="GO" id="GO:0030145">
    <property type="term" value="F:manganese ion binding"/>
    <property type="evidence" value="ECO:0007669"/>
    <property type="project" value="UniProtKB-UniRule"/>
</dbReference>
<dbReference type="GO" id="GO:0003723">
    <property type="term" value="F:RNA binding"/>
    <property type="evidence" value="ECO:0007669"/>
    <property type="project" value="InterPro"/>
</dbReference>
<dbReference type="GO" id="GO:0004523">
    <property type="term" value="F:RNA-DNA hybrid ribonuclease activity"/>
    <property type="evidence" value="ECO:0007669"/>
    <property type="project" value="UniProtKB-UniRule"/>
</dbReference>
<dbReference type="GO" id="GO:0043137">
    <property type="term" value="P:DNA replication, removal of RNA primer"/>
    <property type="evidence" value="ECO:0007669"/>
    <property type="project" value="TreeGrafter"/>
</dbReference>
<dbReference type="GO" id="GO:0006298">
    <property type="term" value="P:mismatch repair"/>
    <property type="evidence" value="ECO:0007669"/>
    <property type="project" value="TreeGrafter"/>
</dbReference>
<dbReference type="CDD" id="cd07182">
    <property type="entry name" value="RNase_HII_bacteria_HII_like"/>
    <property type="match status" value="1"/>
</dbReference>
<dbReference type="FunFam" id="3.30.420.10:FF:000078">
    <property type="entry name" value="Ribonuclease HII"/>
    <property type="match status" value="1"/>
</dbReference>
<dbReference type="Gene3D" id="3.30.420.10">
    <property type="entry name" value="Ribonuclease H-like superfamily/Ribonuclease H"/>
    <property type="match status" value="1"/>
</dbReference>
<dbReference type="HAMAP" id="MF_00052_B">
    <property type="entry name" value="RNase_HII_B"/>
    <property type="match status" value="1"/>
</dbReference>
<dbReference type="InterPro" id="IPR022898">
    <property type="entry name" value="RNase_HII"/>
</dbReference>
<dbReference type="InterPro" id="IPR001352">
    <property type="entry name" value="RNase_HII/HIII"/>
</dbReference>
<dbReference type="InterPro" id="IPR024567">
    <property type="entry name" value="RNase_HII/HIII_dom"/>
</dbReference>
<dbReference type="InterPro" id="IPR012337">
    <property type="entry name" value="RNaseH-like_sf"/>
</dbReference>
<dbReference type="InterPro" id="IPR036397">
    <property type="entry name" value="RNaseH_sf"/>
</dbReference>
<dbReference type="NCBIfam" id="NF000595">
    <property type="entry name" value="PRK00015.1-3"/>
    <property type="match status" value="1"/>
</dbReference>
<dbReference type="PANTHER" id="PTHR10954">
    <property type="entry name" value="RIBONUCLEASE H2 SUBUNIT A"/>
    <property type="match status" value="1"/>
</dbReference>
<dbReference type="PANTHER" id="PTHR10954:SF18">
    <property type="entry name" value="RIBONUCLEASE HII"/>
    <property type="match status" value="1"/>
</dbReference>
<dbReference type="Pfam" id="PF01351">
    <property type="entry name" value="RNase_HII"/>
    <property type="match status" value="1"/>
</dbReference>
<dbReference type="SUPFAM" id="SSF53098">
    <property type="entry name" value="Ribonuclease H-like"/>
    <property type="match status" value="1"/>
</dbReference>
<dbReference type="PROSITE" id="PS51975">
    <property type="entry name" value="RNASE_H_2"/>
    <property type="match status" value="1"/>
</dbReference>
<gene>
    <name evidence="1" type="primary">rnhB</name>
    <name type="ordered locus">Nham_3221</name>
</gene>
<protein>
    <recommendedName>
        <fullName evidence="1">Ribonuclease HII</fullName>
        <shortName evidence="1">RNase HII</shortName>
        <ecNumber evidence="1">3.1.26.4</ecNumber>
    </recommendedName>
</protein>
<keyword id="KW-0963">Cytoplasm</keyword>
<keyword id="KW-0255">Endonuclease</keyword>
<keyword id="KW-0378">Hydrolase</keyword>
<keyword id="KW-0464">Manganese</keyword>
<keyword id="KW-0479">Metal-binding</keyword>
<keyword id="KW-0540">Nuclease</keyword>
<keyword id="KW-1185">Reference proteome</keyword>
<evidence type="ECO:0000255" key="1">
    <source>
        <dbReference type="HAMAP-Rule" id="MF_00052"/>
    </source>
</evidence>
<evidence type="ECO:0000255" key="2">
    <source>
        <dbReference type="PROSITE-ProRule" id="PRU01319"/>
    </source>
</evidence>